<dbReference type="EC" id="1.-.-.-" evidence="8"/>
<dbReference type="EMBL" id="HF679023">
    <property type="protein sequence ID" value="CCT63355.1"/>
    <property type="molecule type" value="Genomic_DNA"/>
</dbReference>
<dbReference type="SMR" id="S0DLN7"/>
<dbReference type="STRING" id="1279085.S0DLN7"/>
<dbReference type="EnsemblFungi" id="CCT63355">
    <property type="protein sequence ID" value="CCT63355"/>
    <property type="gene ID" value="FFUJ_00009"/>
</dbReference>
<dbReference type="VEuPathDB" id="FungiDB:FFUJ_00009"/>
<dbReference type="HOGENOM" id="CLU_308347_0_0_1"/>
<dbReference type="Proteomes" id="UP000016800">
    <property type="component" value="Chromosome 1"/>
</dbReference>
<dbReference type="GO" id="GO:0005737">
    <property type="term" value="C:cytoplasm"/>
    <property type="evidence" value="ECO:0007669"/>
    <property type="project" value="TreeGrafter"/>
</dbReference>
<dbReference type="GO" id="GO:0004128">
    <property type="term" value="F:cytochrome-b5 reductase activity, acting on NAD(P)H"/>
    <property type="evidence" value="ECO:0007669"/>
    <property type="project" value="TreeGrafter"/>
</dbReference>
<dbReference type="GO" id="GO:0020037">
    <property type="term" value="F:heme binding"/>
    <property type="evidence" value="ECO:0007669"/>
    <property type="project" value="InterPro"/>
</dbReference>
<dbReference type="GO" id="GO:0046872">
    <property type="term" value="F:metal ion binding"/>
    <property type="evidence" value="ECO:0007669"/>
    <property type="project" value="UniProtKB-KW"/>
</dbReference>
<dbReference type="GO" id="GO:0019441">
    <property type="term" value="P:L-tryptophan catabolic process to kynurenine"/>
    <property type="evidence" value="ECO:0007669"/>
    <property type="project" value="InterPro"/>
</dbReference>
<dbReference type="Gene3D" id="3.10.120.10">
    <property type="entry name" value="Cytochrome b5-like heme/steroid binding domain"/>
    <property type="match status" value="1"/>
</dbReference>
<dbReference type="Gene3D" id="3.40.50.80">
    <property type="entry name" value="Nucleotide-binding domain of ferredoxin-NADP reductase (FNR) module"/>
    <property type="match status" value="1"/>
</dbReference>
<dbReference type="InterPro" id="IPR001199">
    <property type="entry name" value="Cyt_B5-like_heme/steroid-bd"/>
</dbReference>
<dbReference type="InterPro" id="IPR036400">
    <property type="entry name" value="Cyt_B5-like_heme/steroid_sf"/>
</dbReference>
<dbReference type="InterPro" id="IPR051872">
    <property type="entry name" value="Cytochrome_b5/Flavoprotein_Rdt"/>
</dbReference>
<dbReference type="InterPro" id="IPR017927">
    <property type="entry name" value="FAD-bd_FR_type"/>
</dbReference>
<dbReference type="InterPro" id="IPR039261">
    <property type="entry name" value="FNR_nucleotide-bd"/>
</dbReference>
<dbReference type="InterPro" id="IPR017938">
    <property type="entry name" value="Riboflavin_synthase-like_b-brl"/>
</dbReference>
<dbReference type="InterPro" id="IPR037217">
    <property type="entry name" value="Trp/Indoleamine_2_3_dOase-like"/>
</dbReference>
<dbReference type="PANTHER" id="PTHR46237:SF1">
    <property type="entry name" value="CYTOCHROME B5 REDUCTASE 4"/>
    <property type="match status" value="1"/>
</dbReference>
<dbReference type="PANTHER" id="PTHR46237">
    <property type="entry name" value="CYTOCHROME B5 REDUCTASE 4 FAMILY MEMBER"/>
    <property type="match status" value="1"/>
</dbReference>
<dbReference type="Pfam" id="PF00173">
    <property type="entry name" value="Cyt-b5"/>
    <property type="match status" value="1"/>
</dbReference>
<dbReference type="SMART" id="SM01117">
    <property type="entry name" value="Cyt-b5"/>
    <property type="match status" value="1"/>
</dbReference>
<dbReference type="SUPFAM" id="SSF55856">
    <property type="entry name" value="Cytochrome b5-like heme/steroid binding domain"/>
    <property type="match status" value="1"/>
</dbReference>
<dbReference type="SUPFAM" id="SSF52343">
    <property type="entry name" value="Ferredoxin reductase-like, C-terminal NADP-linked domain"/>
    <property type="match status" value="1"/>
</dbReference>
<dbReference type="SUPFAM" id="SSF140959">
    <property type="entry name" value="Indolic compounds 2,3-dioxygenase-like"/>
    <property type="match status" value="1"/>
</dbReference>
<dbReference type="SUPFAM" id="SSF63380">
    <property type="entry name" value="Riboflavin synthase domain-like"/>
    <property type="match status" value="1"/>
</dbReference>
<dbReference type="PROSITE" id="PS50255">
    <property type="entry name" value="CYTOCHROME_B5_2"/>
    <property type="match status" value="1"/>
</dbReference>
<dbReference type="PROSITE" id="PS51384">
    <property type="entry name" value="FAD_FR"/>
    <property type="match status" value="1"/>
</dbReference>
<feature type="chain" id="PRO_0000437165" description="Cytochrome b5-like reductase apf12">
    <location>
        <begin position="1"/>
        <end position="961"/>
    </location>
</feature>
<feature type="domain" description="FAD-binding FR-type" evidence="3">
    <location>
        <begin position="429"/>
        <end position="548"/>
    </location>
</feature>
<feature type="domain" description="Cytochrome b5 heme-binding" evidence="2">
    <location>
        <begin position="716"/>
        <end position="793"/>
    </location>
</feature>
<feature type="binding site" evidence="1">
    <location>
        <position position="298"/>
    </location>
    <ligand>
        <name>FAD</name>
        <dbReference type="ChEBI" id="CHEBI:57692"/>
    </ligand>
</feature>
<feature type="binding site" evidence="1">
    <location>
        <begin position="453"/>
        <end position="456"/>
    </location>
    <ligand>
        <name>NADP(+)</name>
        <dbReference type="ChEBI" id="CHEBI:58349"/>
    </ligand>
</feature>
<feature type="binding site" evidence="1">
    <location>
        <begin position="499"/>
        <end position="500"/>
    </location>
    <ligand>
        <name>NADP(+)</name>
        <dbReference type="ChEBI" id="CHEBI:58349"/>
    </ligand>
</feature>
<feature type="binding site" evidence="1">
    <location>
        <begin position="753"/>
        <end position="755"/>
    </location>
    <ligand>
        <name>FAD</name>
        <dbReference type="ChEBI" id="CHEBI:57692"/>
    </ligand>
</feature>
<feature type="binding site" evidence="1">
    <location>
        <position position="753"/>
    </location>
    <ligand>
        <name>NADP(+)</name>
        <dbReference type="ChEBI" id="CHEBI:58349"/>
    </ligand>
</feature>
<organism>
    <name type="scientific">Gibberella fujikuroi (strain CBS 195.34 / IMI 58289 / NRRL A-6831)</name>
    <name type="common">Bakanae and foot rot disease fungus</name>
    <name type="synonym">Fusarium fujikuroi</name>
    <dbReference type="NCBI Taxonomy" id="1279085"/>
    <lineage>
        <taxon>Eukaryota</taxon>
        <taxon>Fungi</taxon>
        <taxon>Dikarya</taxon>
        <taxon>Ascomycota</taxon>
        <taxon>Pezizomycotina</taxon>
        <taxon>Sordariomycetes</taxon>
        <taxon>Hypocreomycetidae</taxon>
        <taxon>Hypocreales</taxon>
        <taxon>Nectriaceae</taxon>
        <taxon>Fusarium</taxon>
        <taxon>Fusarium fujikuroi species complex</taxon>
    </lineage>
</organism>
<evidence type="ECO:0000250" key="1">
    <source>
        <dbReference type="UniProtKB" id="P08165"/>
    </source>
</evidence>
<evidence type="ECO:0000255" key="2">
    <source>
        <dbReference type="PROSITE-ProRule" id="PRU00279"/>
    </source>
</evidence>
<evidence type="ECO:0000255" key="3">
    <source>
        <dbReference type="PROSITE-ProRule" id="PRU00716"/>
    </source>
</evidence>
<evidence type="ECO:0000269" key="4">
    <source>
    </source>
</evidence>
<evidence type="ECO:0000269" key="5">
    <source>
    </source>
</evidence>
<evidence type="ECO:0000303" key="6">
    <source>
    </source>
</evidence>
<evidence type="ECO:0000305" key="7"/>
<evidence type="ECO:0000305" key="8">
    <source>
    </source>
</evidence>
<name>APF12_GIBF5</name>
<gene>
    <name evidence="6" type="primary">apf12</name>
    <name type="ORF">FFUJ_00009</name>
</gene>
<protein>
    <recommendedName>
        <fullName evidence="6">Cytochrome b5-like reductase apf12</fullName>
        <ecNumber evidence="8">1.-.-.-</ecNumber>
    </recommendedName>
    <alternativeName>
        <fullName evidence="6">Apicidin F synthesis protein 12</fullName>
    </alternativeName>
</protein>
<reference key="1">
    <citation type="journal article" date="2013" name="PLoS Pathog.">
        <title>Deciphering the cryptic genome: genome-wide analyses of the rice pathogen Fusarium fujikuroi reveal complex regulation of secondary metabolism and novel metabolites.</title>
        <authorList>
            <person name="Wiemann P."/>
            <person name="Sieber C.M.K."/>
            <person name="von Bargen K.W."/>
            <person name="Studt L."/>
            <person name="Niehaus E.-M."/>
            <person name="Espino J.J."/>
            <person name="Huss K."/>
            <person name="Michielse C.B."/>
            <person name="Albermann S."/>
            <person name="Wagner D."/>
            <person name="Bergner S.V."/>
            <person name="Connolly L.R."/>
            <person name="Fischer A."/>
            <person name="Reuter G."/>
            <person name="Kleigrewe K."/>
            <person name="Bald T."/>
            <person name="Wingfield B.D."/>
            <person name="Ophir R."/>
            <person name="Freeman S."/>
            <person name="Hippler M."/>
            <person name="Smith K.M."/>
            <person name="Brown D.W."/>
            <person name="Proctor R.H."/>
            <person name="Muensterkoetter M."/>
            <person name="Freitag M."/>
            <person name="Humpf H.-U."/>
            <person name="Gueldener U."/>
            <person name="Tudzynski B."/>
        </authorList>
    </citation>
    <scope>NUCLEOTIDE SEQUENCE [LARGE SCALE GENOMIC DNA]</scope>
    <source>
        <strain>CBS 195.34 / IMI 58289 / NRRL A-6831</strain>
    </source>
</reference>
<reference key="2">
    <citation type="journal article" date="2013" name="J. Nat. Prod.">
        <title>Structure elucidation and antimalarial activity of apicidin F: an apicidin-like compound produced by Fusarium fujikuroi.</title>
        <authorList>
            <person name="von Bargen K.W."/>
            <person name="Niehaus E.M."/>
            <person name="Bergander K."/>
            <person name="Brun R."/>
            <person name="Tudzynski B."/>
            <person name="Humpf H.U."/>
        </authorList>
    </citation>
    <scope>FUNCTION</scope>
    <scope>BIOTECHNOLOGY</scope>
</reference>
<reference key="3">
    <citation type="journal article" date="2014" name="PLoS ONE">
        <title>Apicidin F: characterization and genetic manipulation of a new secondary metabolite gene cluster in the rice pathogen Fusarium fujikuroi.</title>
        <authorList>
            <person name="Niehaus E.M."/>
            <person name="Janevska S."/>
            <person name="von Bargen K.W."/>
            <person name="Sieber C.M."/>
            <person name="Harrer H."/>
            <person name="Humpf H.U."/>
            <person name="Tudzynski B."/>
        </authorList>
    </citation>
    <scope>FUNCTION</scope>
    <scope>INDUCTION</scope>
</reference>
<sequence>MGIAQPGELAPVPRFRHLPFTIPNGIGRDTYLKIHNVMNHLGRAVLVGQHRRLIQALSSDLGVDSLVAMVSISMQDSEVCSAFSVYLTTLEQAYHWPRESTLSTPEQLEDHKLVIQMLQQPELRDTLVASVHAQYDHSATPAQVALSALSIAKQMIDQATETRSNKTKLPTEIQDLVNLLYRTSRGDWFIQGNYTDPDSHKEFGRLHEVIRTNGTQRSVQEIFQRFNGISWLQRMPLLHQNFASNSSILCAAYADLQVAMALARDELFSMVIDEPIWGLTFAKFSKGVGLCTIGAGGADCPMFRMMDALCGRADNINQAALLDELDFRSRFFPPGMRALINDLVTAPSVRSHISSGEASYELTQAFRAMEQIRYDLYEMHRKKAMRIALALRAGQQATSSGVQNATTPEKYIASTLSAAIKVRFGQEPARPQVDAFAWSTPLLCSDTGVIQTSRIQFVFSTPLAVSPGDSLRVAVEVEQGDWHIRTYSITHAYARQGSSKARDQICQAVGSAEICVRSKGQVSSFLCNQKTGFPVRVMIKPAPHFRIAGNTSPHEETLFVAQGGAVCVFLAWLAWQKQLVGTYRLVVGARNYNMLAYVGQLEKISSSFGSHLIVHVVLSRPGHGDIQRFVPGNIKASTGRVTHHLGLFSSCSTKATYVCGSASFALDVVRCLSQGPGTKREVPKVSRLQPIVTSRLPHFRLHVAAATENGTDKPCLNQITKLELALHNSPGDLWIALGDRVFDISQVPSFHPGGEKVLMYRAGRQAQDVFDTVHEGCYMISSLLNEMVIGRLDSARGEFSQWEDYLDKIVEIQNDLTNHSRIEQAPTGSIEQLAESPPVEILRGATNCFVKGWSSLLQQSGIGDSGVVSLLSSHQDAISALDAHVRMVYENDFEDPVRYANALRKIFDAHSRLVCGIHTAIDELKRHIVERLVEGDEPELTSLHISTARISQQLRETSKSY</sequence>
<accession>S0DLN7</accession>
<comment type="function">
    <text evidence="4 5">Cytochrome b5-like reductase; part of the gene cluster that mediates the biosynthesis of the cyclic tetrapeptide apicidin F (APF) (PubMed:25058475). The non-ribosomal peptide synthetase apf1 incorporates four different amino acids to produce apicidin F: L-phenylalanine, D-pipecolic acid (D-pip), N-methoxy-L-tryptophan and L-2-aminooctanedioic acid (PubMed:25058475). L-Phenylalanine is the only proteinogenic amino acid directly used by apf1 (PubMed:23825955, PubMed:25058475). The 3 other apf1 substrates are non-proteinogenic and have to be modified by other enzymes of the cluster (PubMed:25058475). Lysine is converted to delta-1-pyrroline-5-carboxylate (P5C) which is reduced to L-pipecolic acid (L-pip) by apf3 (PubMed:25058475). L-pip is epimerized to D-pip, probably by apf1 activity, prior to incorporation (PubMed:25058475). L-Tryptophan is N-oxidyzed by one of the cytochrome P450 monooxygenases (apf7 or apf8), and further methylated at the hydroxy group by the O-methyltransferase apf6 to yield N-methoxy-L-tryptophan (PubMed:25058475). The synthesis of the fourth apf1 substrate is more complex (PubMed:25058475). The fatty acid synthase apf5 is involved in the synthesis of the octanoic acid backbone of L-2-aminooctanedioic acid by fixing one acetyl-CoA unit and three malonyl-CoA units (PubMed:25058475). Then one of the cytochrome P450 monooxygenases (apf7 or apf8) may oxidize this backbone to 2-oxooctanoic acid (PubMed:25058475). The aminotransferase apf4 is predicted to catalyze the exchange of the keto group with an amino group (PubMed:25058475). The next step would be the oxidation of 2-aminooctanoic acid by one of the cytochrome P450 monooxygenases (apf7 or apf8). The last step is the oxidation of 2-amino-8-hydroxyoctanoic acid to 2-aminooctanedioic acid is catalyzed by the FAD-dependent monooxygenase apf9 (PubMed:25058475).</text>
</comment>
<comment type="cofactor">
    <cofactor evidence="7">
        <name>FAD</name>
        <dbReference type="ChEBI" id="CHEBI:57692"/>
    </cofactor>
</comment>
<comment type="pathway">
    <text evidence="5">Secondary metabolite biosynthesis.</text>
</comment>
<comment type="induction">
    <text evidence="5">Expression is positively regulated by the apicidin F cluster-specific transcription factor apf2 that binds to the eight-base-pair motif 5'-TGACGTGA-3' called the 'Api-box' that is found in all promoters of the apicidin F cluster except in the promoter region of apf2 itself (PubMed:25058475).</text>
</comment>
<comment type="biotechnology">
    <text evidence="4">Apicidin F, like the other known apicidins, is a cyclic tetrapeptides with anti-malarial properties via histone deacetylase inhibitory activity (PubMed:24195442).</text>
</comment>
<comment type="similarity">
    <text evidence="7">Belongs to the flavoprotein pyridine nucleotide cytochrome reductase family.</text>
</comment>
<keyword id="KW-0274">FAD</keyword>
<keyword id="KW-0285">Flavoprotein</keyword>
<keyword id="KW-0349">Heme</keyword>
<keyword id="KW-0408">Iron</keyword>
<keyword id="KW-0479">Metal-binding</keyword>
<keyword id="KW-0520">NAD</keyword>
<keyword id="KW-0521">NADP</keyword>
<keyword id="KW-0560">Oxidoreductase</keyword>
<keyword id="KW-1185">Reference proteome</keyword>
<proteinExistence type="evidence at protein level"/>